<accession>A3MTU1</accession>
<comment type="catalytic activity">
    <reaction evidence="1">
        <text>D-glyceraldehyde 3-phosphate + phosphate + NADP(+) = (2R)-3-phospho-glyceroyl phosphate + NADPH + H(+)</text>
        <dbReference type="Rhea" id="RHEA:10296"/>
        <dbReference type="ChEBI" id="CHEBI:15378"/>
        <dbReference type="ChEBI" id="CHEBI:43474"/>
        <dbReference type="ChEBI" id="CHEBI:57604"/>
        <dbReference type="ChEBI" id="CHEBI:57783"/>
        <dbReference type="ChEBI" id="CHEBI:58349"/>
        <dbReference type="ChEBI" id="CHEBI:59776"/>
        <dbReference type="EC" id="1.2.1.59"/>
    </reaction>
</comment>
<comment type="catalytic activity">
    <reaction evidence="1">
        <text>D-glyceraldehyde 3-phosphate + phosphate + NAD(+) = (2R)-3-phospho-glyceroyl phosphate + NADH + H(+)</text>
        <dbReference type="Rhea" id="RHEA:10300"/>
        <dbReference type="ChEBI" id="CHEBI:15378"/>
        <dbReference type="ChEBI" id="CHEBI:43474"/>
        <dbReference type="ChEBI" id="CHEBI:57540"/>
        <dbReference type="ChEBI" id="CHEBI:57604"/>
        <dbReference type="ChEBI" id="CHEBI:57945"/>
        <dbReference type="ChEBI" id="CHEBI:59776"/>
        <dbReference type="EC" id="1.2.1.59"/>
    </reaction>
</comment>
<comment type="pathway">
    <text evidence="1">Carbohydrate degradation; glycolysis; pyruvate from D-glyceraldehyde 3-phosphate: step 1/5.</text>
</comment>
<comment type="subunit">
    <text evidence="1">Homotetramer.</text>
</comment>
<comment type="subcellular location">
    <subcellularLocation>
        <location evidence="1">Cytoplasm</location>
    </subcellularLocation>
</comment>
<comment type="similarity">
    <text evidence="1">Belongs to the glyceraldehyde-3-phosphate dehydrogenase family.</text>
</comment>
<name>G3P_PYRCJ</name>
<protein>
    <recommendedName>
        <fullName evidence="1">Glyceraldehyde-3-phosphate dehydrogenase</fullName>
        <shortName evidence="1">GAPDH</shortName>
        <ecNumber evidence="1">1.2.1.59</ecNumber>
    </recommendedName>
    <alternativeName>
        <fullName evidence="1">NAD(P)-dependent glyceraldehyde-3-phosphate dehydrogenase</fullName>
    </alternativeName>
</protein>
<feature type="chain" id="PRO_0000300976" description="Glyceraldehyde-3-phosphate dehydrogenase">
    <location>
        <begin position="1"/>
        <end position="344"/>
    </location>
</feature>
<feature type="active site" description="Nucleophile" evidence="1">
    <location>
        <position position="140"/>
    </location>
</feature>
<feature type="binding site" evidence="1">
    <location>
        <begin position="11"/>
        <end position="12"/>
    </location>
    <ligand>
        <name>NAD(+)</name>
        <dbReference type="ChEBI" id="CHEBI:57540"/>
    </ligand>
</feature>
<feature type="binding site" evidence="1">
    <location>
        <position position="110"/>
    </location>
    <ligand>
        <name>NAD(+)</name>
        <dbReference type="ChEBI" id="CHEBI:57540"/>
    </ligand>
</feature>
<feature type="binding site" evidence="1">
    <location>
        <begin position="139"/>
        <end position="141"/>
    </location>
    <ligand>
        <name>D-glyceraldehyde 3-phosphate</name>
        <dbReference type="ChEBI" id="CHEBI:59776"/>
    </ligand>
</feature>
<feature type="binding site" evidence="1">
    <location>
        <position position="169"/>
    </location>
    <ligand>
        <name>NAD(+)</name>
        <dbReference type="ChEBI" id="CHEBI:57540"/>
    </ligand>
</feature>
<feature type="binding site" evidence="1">
    <location>
        <begin position="195"/>
        <end position="196"/>
    </location>
    <ligand>
        <name>D-glyceraldehyde 3-phosphate</name>
        <dbReference type="ChEBI" id="CHEBI:59776"/>
    </ligand>
</feature>
<feature type="binding site" evidence="1">
    <location>
        <position position="302"/>
    </location>
    <ligand>
        <name>NAD(+)</name>
        <dbReference type="ChEBI" id="CHEBI:57540"/>
    </ligand>
</feature>
<keyword id="KW-0963">Cytoplasm</keyword>
<keyword id="KW-0324">Glycolysis</keyword>
<keyword id="KW-0520">NAD</keyword>
<keyword id="KW-0521">NADP</keyword>
<keyword id="KW-0560">Oxidoreductase</keyword>
<evidence type="ECO:0000255" key="1">
    <source>
        <dbReference type="HAMAP-Rule" id="MF_00559"/>
    </source>
</evidence>
<organism>
    <name type="scientific">Pyrobaculum calidifontis (strain DSM 21063 / JCM 11548 / VA1)</name>
    <dbReference type="NCBI Taxonomy" id="410359"/>
    <lineage>
        <taxon>Archaea</taxon>
        <taxon>Thermoproteota</taxon>
        <taxon>Thermoprotei</taxon>
        <taxon>Thermoproteales</taxon>
        <taxon>Thermoproteaceae</taxon>
        <taxon>Pyrobaculum</taxon>
    </lineage>
</organism>
<gene>
    <name evidence="1" type="primary">gap</name>
    <name type="ordered locus">Pcal_0632</name>
</gene>
<reference key="1">
    <citation type="submission" date="2007-02" db="EMBL/GenBank/DDBJ databases">
        <title>Complete sequence of Pyrobaculum calidifontis JCM 11548.</title>
        <authorList>
            <consortium name="US DOE Joint Genome Institute"/>
            <person name="Copeland A."/>
            <person name="Lucas S."/>
            <person name="Lapidus A."/>
            <person name="Barry K."/>
            <person name="Glavina del Rio T."/>
            <person name="Dalin E."/>
            <person name="Tice H."/>
            <person name="Pitluck S."/>
            <person name="Chain P."/>
            <person name="Malfatti S."/>
            <person name="Shin M."/>
            <person name="Vergez L."/>
            <person name="Schmutz J."/>
            <person name="Larimer F."/>
            <person name="Land M."/>
            <person name="Hauser L."/>
            <person name="Kyrpides N."/>
            <person name="Mikhailova N."/>
            <person name="Cozen A.E."/>
            <person name="Fitz-Gibbon S.T."/>
            <person name="House C.H."/>
            <person name="Saltikov C."/>
            <person name="Lowe T.M."/>
            <person name="Richardson P."/>
        </authorList>
    </citation>
    <scope>NUCLEOTIDE SEQUENCE [LARGE SCALE GENOMIC DNA]</scope>
    <source>
        <strain>DSM 21063 / JCM 11548 / VA1</strain>
    </source>
</reference>
<sequence length="344" mass="37895">MIKVGVVGYGTIGKRIADAVALQDDMRVVGVVKMTPDYEAKIAAARGFPVYTAADRVEKFKKAGIEVAGTVEDLVKASDVVVDASPEDVGRENKEKYYRQLDKRYIFQGGEEADVAEVSFNALANYDEARGKRYIRVVSCNTTGITRVLSALLLNGIGIRKARIFIARRGADPKEHKKGPINDVVPNPTAVPSHHGPDVQTVLKDVDIVTMAVAVPVTIMHMHMAYIELDGPRSRDEVLEAFAKTPRIFLADVGSGFQSLAQFIEYARDLGRPRGDFPEVAVFRDSVTVRGDELYLMYGVHQESIVVPENVDAIRAALGVLPKWQSIEKTDKSLKLFTEGKRYA</sequence>
<dbReference type="EC" id="1.2.1.59" evidence="1"/>
<dbReference type="EMBL" id="CP000561">
    <property type="protein sequence ID" value="ABO08058.1"/>
    <property type="molecule type" value="Genomic_DNA"/>
</dbReference>
<dbReference type="RefSeq" id="WP_011849316.1">
    <property type="nucleotide sequence ID" value="NC_009073.1"/>
</dbReference>
<dbReference type="SMR" id="A3MTU1"/>
<dbReference type="STRING" id="410359.Pcal_0632"/>
<dbReference type="GeneID" id="4909422"/>
<dbReference type="KEGG" id="pcl:Pcal_0632"/>
<dbReference type="eggNOG" id="arCOG00493">
    <property type="taxonomic scope" value="Archaea"/>
</dbReference>
<dbReference type="HOGENOM" id="CLU_069533_0_0_2"/>
<dbReference type="OrthoDB" id="295712at2157"/>
<dbReference type="UniPathway" id="UPA00109">
    <property type="reaction ID" value="UER00184"/>
</dbReference>
<dbReference type="Proteomes" id="UP000001431">
    <property type="component" value="Chromosome"/>
</dbReference>
<dbReference type="GO" id="GO:0005737">
    <property type="term" value="C:cytoplasm"/>
    <property type="evidence" value="ECO:0007669"/>
    <property type="project" value="UniProtKB-SubCell"/>
</dbReference>
<dbReference type="GO" id="GO:0008839">
    <property type="term" value="F:4-hydroxy-tetrahydrodipicolinate reductase"/>
    <property type="evidence" value="ECO:0007669"/>
    <property type="project" value="InterPro"/>
</dbReference>
<dbReference type="GO" id="GO:0004365">
    <property type="term" value="F:glyceraldehyde-3-phosphate dehydrogenase (NAD+) (phosphorylating) activity"/>
    <property type="evidence" value="ECO:0007669"/>
    <property type="project" value="UniProtKB-UniRule"/>
</dbReference>
<dbReference type="GO" id="GO:0047100">
    <property type="term" value="F:glyceraldehyde-3-phosphate dehydrogenase (NADP+) (phosphorylating) activity"/>
    <property type="evidence" value="ECO:0007669"/>
    <property type="project" value="RHEA"/>
</dbReference>
<dbReference type="GO" id="GO:0051287">
    <property type="term" value="F:NAD binding"/>
    <property type="evidence" value="ECO:0007669"/>
    <property type="project" value="InterPro"/>
</dbReference>
<dbReference type="GO" id="GO:0050661">
    <property type="term" value="F:NADP binding"/>
    <property type="evidence" value="ECO:0007669"/>
    <property type="project" value="InterPro"/>
</dbReference>
<dbReference type="GO" id="GO:0006096">
    <property type="term" value="P:glycolytic process"/>
    <property type="evidence" value="ECO:0007669"/>
    <property type="project" value="UniProtKB-UniRule"/>
</dbReference>
<dbReference type="GO" id="GO:0009089">
    <property type="term" value="P:lysine biosynthetic process via diaminopimelate"/>
    <property type="evidence" value="ECO:0007669"/>
    <property type="project" value="InterPro"/>
</dbReference>
<dbReference type="CDD" id="cd18127">
    <property type="entry name" value="GAPDH_II_C"/>
    <property type="match status" value="1"/>
</dbReference>
<dbReference type="CDD" id="cd02278">
    <property type="entry name" value="GAPDH_II_N"/>
    <property type="match status" value="1"/>
</dbReference>
<dbReference type="Gene3D" id="3.30.360.10">
    <property type="entry name" value="Dihydrodipicolinate Reductase, domain 2"/>
    <property type="match status" value="1"/>
</dbReference>
<dbReference type="Gene3D" id="3.40.50.720">
    <property type="entry name" value="NAD(P)-binding Rossmann-like Domain"/>
    <property type="match status" value="1"/>
</dbReference>
<dbReference type="HAMAP" id="MF_00559">
    <property type="entry name" value="G3P_dehdrog_arch"/>
    <property type="match status" value="1"/>
</dbReference>
<dbReference type="InterPro" id="IPR000846">
    <property type="entry name" value="DapB_N"/>
</dbReference>
<dbReference type="InterPro" id="IPR020831">
    <property type="entry name" value="GlycerAld/Erythrose_P_DH"/>
</dbReference>
<dbReference type="InterPro" id="IPR020830">
    <property type="entry name" value="GlycerAld_3-P_DH_AS"/>
</dbReference>
<dbReference type="InterPro" id="IPR020829">
    <property type="entry name" value="GlycerAld_3-P_DH_cat"/>
</dbReference>
<dbReference type="InterPro" id="IPR020828">
    <property type="entry name" value="GlycerAld_3-P_DH_NAD(P)-bd"/>
</dbReference>
<dbReference type="InterPro" id="IPR006436">
    <property type="entry name" value="Glyceraldehyde-3-P_DH_2_arc"/>
</dbReference>
<dbReference type="InterPro" id="IPR036291">
    <property type="entry name" value="NAD(P)-bd_dom_sf"/>
</dbReference>
<dbReference type="NCBIfam" id="TIGR01546">
    <property type="entry name" value="GAPDH-II_archae"/>
    <property type="match status" value="1"/>
</dbReference>
<dbReference type="NCBIfam" id="NF003251">
    <property type="entry name" value="PRK04207.1"/>
    <property type="match status" value="1"/>
</dbReference>
<dbReference type="Pfam" id="PF01113">
    <property type="entry name" value="DapB_N"/>
    <property type="match status" value="1"/>
</dbReference>
<dbReference type="Pfam" id="PF02800">
    <property type="entry name" value="Gp_dh_C"/>
    <property type="match status" value="1"/>
</dbReference>
<dbReference type="PIRSF" id="PIRSF000149">
    <property type="entry name" value="GAP_DH"/>
    <property type="match status" value="1"/>
</dbReference>
<dbReference type="SMART" id="SM00846">
    <property type="entry name" value="Gp_dh_N"/>
    <property type="match status" value="1"/>
</dbReference>
<dbReference type="SUPFAM" id="SSF55347">
    <property type="entry name" value="Glyceraldehyde-3-phosphate dehydrogenase-like, C-terminal domain"/>
    <property type="match status" value="1"/>
</dbReference>
<dbReference type="SUPFAM" id="SSF51735">
    <property type="entry name" value="NAD(P)-binding Rossmann-fold domains"/>
    <property type="match status" value="1"/>
</dbReference>
<dbReference type="PROSITE" id="PS00071">
    <property type="entry name" value="GAPDH"/>
    <property type="match status" value="1"/>
</dbReference>
<proteinExistence type="inferred from homology"/>